<evidence type="ECO:0000250" key="1">
    <source>
        <dbReference type="UniProtKB" id="Q08752"/>
    </source>
</evidence>
<evidence type="ECO:0000250" key="2">
    <source>
        <dbReference type="UniProtKB" id="Q9CR16"/>
    </source>
</evidence>
<evidence type="ECO:0000255" key="3">
    <source>
        <dbReference type="PROSITE-ProRule" id="PRU00156"/>
    </source>
</evidence>
<evidence type="ECO:0000269" key="4">
    <source>
    </source>
</evidence>
<evidence type="ECO:0000269" key="5">
    <source>
    </source>
</evidence>
<evidence type="ECO:0000269" key="6">
    <source>
    </source>
</evidence>
<evidence type="ECO:0000269" key="7">
    <source>
    </source>
</evidence>
<evidence type="ECO:0000269" key="8">
    <source>
    </source>
</evidence>
<evidence type="ECO:0000269" key="9">
    <source>
    </source>
</evidence>
<evidence type="ECO:0000269" key="10">
    <source>
    </source>
</evidence>
<evidence type="ECO:0000303" key="11">
    <source>
    </source>
</evidence>
<evidence type="ECO:0000303" key="12">
    <source>
    </source>
</evidence>
<evidence type="ECO:0000303" key="13">
    <source>
    </source>
</evidence>
<evidence type="ECO:0000305" key="14"/>
<evidence type="ECO:0007829" key="15">
    <source>
        <dbReference type="PDB" id="1IHG"/>
    </source>
</evidence>
<evidence type="ECO:0007829" key="16">
    <source>
        <dbReference type="PDB" id="1IIP"/>
    </source>
</evidence>
<dbReference type="EC" id="5.2.1.8" evidence="2"/>
<dbReference type="EMBL" id="D14074">
    <property type="protein sequence ID" value="BAA03159.1"/>
    <property type="molecule type" value="mRNA"/>
</dbReference>
<dbReference type="EMBL" id="BC113318">
    <property type="protein sequence ID" value="AAI13319.1"/>
    <property type="molecule type" value="mRNA"/>
</dbReference>
<dbReference type="EMBL" id="L11668">
    <property type="protein sequence ID" value="AAA30484.1"/>
    <property type="molecule type" value="mRNA"/>
</dbReference>
<dbReference type="PIR" id="A46579">
    <property type="entry name" value="A46579"/>
</dbReference>
<dbReference type="RefSeq" id="NP_776578.1">
    <property type="nucleotide sequence ID" value="NM_174153.3"/>
</dbReference>
<dbReference type="PDB" id="1IHG">
    <property type="method" value="X-ray"/>
    <property type="resolution" value="1.80 A"/>
    <property type="chains" value="A=1-370"/>
</dbReference>
<dbReference type="PDB" id="1IIP">
    <property type="method" value="X-ray"/>
    <property type="resolution" value="2.00 A"/>
    <property type="chains" value="A=1-370"/>
</dbReference>
<dbReference type="PDBsum" id="1IHG"/>
<dbReference type="PDBsum" id="1IIP"/>
<dbReference type="SMR" id="P26882"/>
<dbReference type="BioGRID" id="158751">
    <property type="interactions" value="1"/>
</dbReference>
<dbReference type="FunCoup" id="P26882">
    <property type="interactions" value="3876"/>
</dbReference>
<dbReference type="IntAct" id="P26882">
    <property type="interactions" value="6"/>
</dbReference>
<dbReference type="MINT" id="P26882"/>
<dbReference type="STRING" id="9913.ENSBTAP00000022180"/>
<dbReference type="PaxDb" id="9913-ENSBTAP00000022180"/>
<dbReference type="Ensembl" id="ENSBTAT00000022180.5">
    <property type="protein sequence ID" value="ENSBTAP00000022180.3"/>
    <property type="gene ID" value="ENSBTAG00000016680.7"/>
</dbReference>
<dbReference type="GeneID" id="281420"/>
<dbReference type="KEGG" id="bta:281420"/>
<dbReference type="CTD" id="5481"/>
<dbReference type="VEuPathDB" id="HostDB:ENSBTAG00000016680"/>
<dbReference type="VGNC" id="VGNC:33197">
    <property type="gene designation" value="PPID"/>
</dbReference>
<dbReference type="eggNOG" id="KOG0546">
    <property type="taxonomic scope" value="Eukaryota"/>
</dbReference>
<dbReference type="GeneTree" id="ENSGT00940000154672"/>
<dbReference type="HOGENOM" id="CLU_012062_37_1_1"/>
<dbReference type="InParanoid" id="P26882"/>
<dbReference type="OMA" id="EMEQNCN"/>
<dbReference type="OrthoDB" id="407558at2759"/>
<dbReference type="TreeFam" id="TF324493"/>
<dbReference type="EvolutionaryTrace" id="P26882"/>
<dbReference type="Proteomes" id="UP000009136">
    <property type="component" value="Chromosome 17"/>
</dbReference>
<dbReference type="Bgee" id="ENSBTAG00000016680">
    <property type="expression patterns" value="Expressed in oocyte and 104 other cell types or tissues"/>
</dbReference>
<dbReference type="GO" id="GO:0005929">
    <property type="term" value="C:cilium"/>
    <property type="evidence" value="ECO:0007669"/>
    <property type="project" value="Ensembl"/>
</dbReference>
<dbReference type="GO" id="GO:0005737">
    <property type="term" value="C:cytoplasm"/>
    <property type="evidence" value="ECO:0000250"/>
    <property type="project" value="UniProtKB"/>
</dbReference>
<dbReference type="GO" id="GO:0005829">
    <property type="term" value="C:cytosol"/>
    <property type="evidence" value="ECO:0000318"/>
    <property type="project" value="GO_Central"/>
</dbReference>
<dbReference type="GO" id="GO:0005730">
    <property type="term" value="C:nucleolus"/>
    <property type="evidence" value="ECO:0000250"/>
    <property type="project" value="UniProtKB"/>
</dbReference>
<dbReference type="GO" id="GO:0005654">
    <property type="term" value="C:nucleoplasm"/>
    <property type="evidence" value="ECO:0007669"/>
    <property type="project" value="UniProtKB-SubCell"/>
</dbReference>
<dbReference type="GO" id="GO:0005634">
    <property type="term" value="C:nucleus"/>
    <property type="evidence" value="ECO:0000250"/>
    <property type="project" value="UniProtKB"/>
</dbReference>
<dbReference type="GO" id="GO:0016018">
    <property type="term" value="F:cyclosporin A binding"/>
    <property type="evidence" value="ECO:0000318"/>
    <property type="project" value="GO_Central"/>
</dbReference>
<dbReference type="GO" id="GO:0030544">
    <property type="term" value="F:Hsp70 protein binding"/>
    <property type="evidence" value="ECO:0000314"/>
    <property type="project" value="UniProtKB"/>
</dbReference>
<dbReference type="GO" id="GO:0051879">
    <property type="term" value="F:Hsp90 protein binding"/>
    <property type="evidence" value="ECO:0000250"/>
    <property type="project" value="UniProtKB"/>
</dbReference>
<dbReference type="GO" id="GO:0030331">
    <property type="term" value="F:nuclear estrogen receptor binding"/>
    <property type="evidence" value="ECO:0000314"/>
    <property type="project" value="UniProtKB"/>
</dbReference>
<dbReference type="GO" id="GO:0003755">
    <property type="term" value="F:peptidyl-prolyl cis-trans isomerase activity"/>
    <property type="evidence" value="ECO:0000250"/>
    <property type="project" value="UniProtKB"/>
</dbReference>
<dbReference type="GO" id="GO:0008134">
    <property type="term" value="F:transcription factor binding"/>
    <property type="evidence" value="ECO:0000250"/>
    <property type="project" value="UniProtKB"/>
</dbReference>
<dbReference type="GO" id="GO:0006915">
    <property type="term" value="P:apoptotic process"/>
    <property type="evidence" value="ECO:0007669"/>
    <property type="project" value="UniProtKB-KW"/>
</dbReference>
<dbReference type="GO" id="GO:0071492">
    <property type="term" value="P:cellular response to UV-A"/>
    <property type="evidence" value="ECO:0000250"/>
    <property type="project" value="UniProtKB"/>
</dbReference>
<dbReference type="GO" id="GO:0061077">
    <property type="term" value="P:chaperone-mediated protein folding"/>
    <property type="evidence" value="ECO:0000250"/>
    <property type="project" value="UniProtKB"/>
</dbReference>
<dbReference type="GO" id="GO:0034389">
    <property type="term" value="P:lipid droplet organization"/>
    <property type="evidence" value="ECO:0000250"/>
    <property type="project" value="UniProtKB"/>
</dbReference>
<dbReference type="GO" id="GO:0000122">
    <property type="term" value="P:negative regulation of transcription by RNA polymerase II"/>
    <property type="evidence" value="ECO:0000250"/>
    <property type="project" value="UniProtKB"/>
</dbReference>
<dbReference type="GO" id="GO:0043065">
    <property type="term" value="P:positive regulation of apoptotic process"/>
    <property type="evidence" value="ECO:0000250"/>
    <property type="project" value="UniProtKB"/>
</dbReference>
<dbReference type="GO" id="GO:0050714">
    <property type="term" value="P:positive regulation of protein secretion"/>
    <property type="evidence" value="ECO:0007669"/>
    <property type="project" value="Ensembl"/>
</dbReference>
<dbReference type="GO" id="GO:0045070">
    <property type="term" value="P:positive regulation of viral genome replication"/>
    <property type="evidence" value="ECO:0007669"/>
    <property type="project" value="Ensembl"/>
</dbReference>
<dbReference type="GO" id="GO:0006457">
    <property type="term" value="P:protein folding"/>
    <property type="evidence" value="ECO:0000314"/>
    <property type="project" value="UniProtKB"/>
</dbReference>
<dbReference type="GO" id="GO:0015031">
    <property type="term" value="P:protein transport"/>
    <property type="evidence" value="ECO:0007669"/>
    <property type="project" value="UniProtKB-KW"/>
</dbReference>
<dbReference type="GO" id="GO:0065003">
    <property type="term" value="P:protein-containing complex assembly"/>
    <property type="evidence" value="ECO:0000250"/>
    <property type="project" value="UniProtKB"/>
</dbReference>
<dbReference type="CDD" id="cd01926">
    <property type="entry name" value="cyclophilin_ABH_like"/>
    <property type="match status" value="1"/>
</dbReference>
<dbReference type="FunFam" id="2.40.100.10:FF:000009">
    <property type="entry name" value="Peptidyl-prolyl cis-trans isomerase D"/>
    <property type="match status" value="1"/>
</dbReference>
<dbReference type="FunFam" id="1.25.40.10:FF:000029">
    <property type="entry name" value="peptidyl-prolyl cis-trans isomerase D"/>
    <property type="match status" value="1"/>
</dbReference>
<dbReference type="Gene3D" id="2.40.100.10">
    <property type="entry name" value="Cyclophilin-like"/>
    <property type="match status" value="1"/>
</dbReference>
<dbReference type="Gene3D" id="1.25.40.10">
    <property type="entry name" value="Tetratricopeptide repeat domain"/>
    <property type="match status" value="1"/>
</dbReference>
<dbReference type="InterPro" id="IPR029000">
    <property type="entry name" value="Cyclophilin-like_dom_sf"/>
</dbReference>
<dbReference type="InterPro" id="IPR020892">
    <property type="entry name" value="Cyclophilin-type_PPIase_CS"/>
</dbReference>
<dbReference type="InterPro" id="IPR002130">
    <property type="entry name" value="Cyclophilin-type_PPIase_dom"/>
</dbReference>
<dbReference type="InterPro" id="IPR011990">
    <property type="entry name" value="TPR-like_helical_dom_sf"/>
</dbReference>
<dbReference type="InterPro" id="IPR019734">
    <property type="entry name" value="TPR_rpt"/>
</dbReference>
<dbReference type="PANTHER" id="PTHR11071">
    <property type="entry name" value="PEPTIDYL-PROLYL CIS-TRANS ISOMERASE"/>
    <property type="match status" value="1"/>
</dbReference>
<dbReference type="PANTHER" id="PTHR11071:SF561">
    <property type="entry name" value="PEPTIDYL-PROLYL CIS-TRANS ISOMERASE D-RELATED"/>
    <property type="match status" value="1"/>
</dbReference>
<dbReference type="Pfam" id="PF00160">
    <property type="entry name" value="Pro_isomerase"/>
    <property type="match status" value="1"/>
</dbReference>
<dbReference type="PRINTS" id="PR00153">
    <property type="entry name" value="CSAPPISMRASE"/>
</dbReference>
<dbReference type="SMART" id="SM00028">
    <property type="entry name" value="TPR"/>
    <property type="match status" value="3"/>
</dbReference>
<dbReference type="SUPFAM" id="SSF50891">
    <property type="entry name" value="Cyclophilin-like"/>
    <property type="match status" value="1"/>
</dbReference>
<dbReference type="SUPFAM" id="SSF48452">
    <property type="entry name" value="TPR-like"/>
    <property type="match status" value="1"/>
</dbReference>
<dbReference type="PROSITE" id="PS00170">
    <property type="entry name" value="CSA_PPIASE_1"/>
    <property type="match status" value="1"/>
</dbReference>
<dbReference type="PROSITE" id="PS50072">
    <property type="entry name" value="CSA_PPIASE_2"/>
    <property type="match status" value="1"/>
</dbReference>
<dbReference type="PROSITE" id="PS50005">
    <property type="entry name" value="TPR"/>
    <property type="match status" value="3"/>
</dbReference>
<dbReference type="PROSITE" id="PS50293">
    <property type="entry name" value="TPR_REGION"/>
    <property type="match status" value="2"/>
</dbReference>
<gene>
    <name evidence="1" type="primary">PPID</name>
    <name type="synonym">CYPD</name>
</gene>
<accession>P26882</accession>
<accession>Q28077</accession>
<accession>Q2HJ45</accession>
<reference key="1">
    <citation type="journal article" date="1993" name="J. Biol. Chem.">
        <title>The cyclophilin component of the unactivated estrogen receptor contains a tetratricopeptide repeat domain and shares identity with p59 (FKBP59).</title>
        <authorList>
            <person name="Ratajczak T."/>
            <person name="Carrello A."/>
            <person name="Mark P.J."/>
            <person name="Warner B.J."/>
            <person name="Simpson R.J."/>
            <person name="Moritz R.L."/>
            <person name="House A.K."/>
        </authorList>
    </citation>
    <scope>NUCLEOTIDE SEQUENCE [MRNA]</scope>
    <scope>PARTIAL PROTEIN SEQUENCE</scope>
    <scope>IDENTIFICATION IN AN ESR1 STEROID RECEPTOR-CHAPERONE COMPLEX</scope>
    <scope>TISSUE SPECIFICITY</scope>
</reference>
<reference key="2">
    <citation type="submission" date="2006-02" db="EMBL/GenBank/DDBJ databases">
        <authorList>
            <consortium name="NIH - Mammalian Gene Collection (MGC) project"/>
        </authorList>
    </citation>
    <scope>NUCLEOTIDE SEQUENCE [LARGE SCALE MRNA]</scope>
    <source>
        <strain>Hereford</strain>
        <tissue>Uterus</tissue>
    </source>
</reference>
<reference key="3">
    <citation type="journal article" date="1993" name="J. Biol. Chem.">
        <title>Cyclophilin-40, a protein with homology to the P59 component of the steroid receptor complex. Cloning of the cDNA and further characterization.</title>
        <authorList>
            <person name="Kieffer L.J."/>
            <person name="Seng T.W."/>
            <person name="Li W."/>
            <person name="Osterman D.G."/>
            <person name="Handschumacher R.E."/>
            <person name="Bayney R.M."/>
        </authorList>
    </citation>
    <scope>NUCLEOTIDE SEQUENCE [MRNA] OF 37-345</scope>
    <source>
        <tissue>Brain</tissue>
    </source>
</reference>
<reference key="4">
    <citation type="journal article" date="1992" name="J. Biol. Chem.">
        <title>Isolation and characterization of a 40-kDa cyclophilin-related protein.</title>
        <authorList>
            <person name="Kieffer L.J."/>
            <person name="Thalhammer T."/>
            <person name="Handschumacher R.E."/>
        </authorList>
    </citation>
    <scope>PROTEIN SEQUENCE OF 18-42; 147-154; 199-219; 228-235 AND 309-312</scope>
    <scope>FUNCTION</scope>
    <source>
        <tissue>Brain</tissue>
    </source>
</reference>
<reference key="5">
    <citation type="journal article" date="1996" name="J. Biol. Chem.">
        <title>Cyclophilin 40 (CyP-40), mapping of its hsp90 binding domain and evidence that FKBP52 competes with CyP-40 for hsp90 binding.</title>
        <authorList>
            <person name="Ratajczak T."/>
            <person name="Carrello A."/>
        </authorList>
    </citation>
    <scope>INTERACTION WITH HSP90AB1</scope>
</reference>
<reference key="6">
    <citation type="journal article" date="1999" name="J. Biol. Chem.">
        <title>The common tetratricopeptide repeat acceptor site for steroid receptor-associated immunophilins and hop is located in the dimerization domain of Hsp90.</title>
        <authorList>
            <person name="Carrello A."/>
            <person name="Ingley E."/>
            <person name="Minchin R.F."/>
            <person name="Tsai S."/>
            <person name="Ratajczak T."/>
        </authorList>
    </citation>
    <scope>INTERACTION WITH HSP90AA1 AND HSP90AB1</scope>
</reference>
<reference key="7">
    <citation type="journal article" date="2004" name="Cell Stress Chaperones">
        <title>Interaction of the Hsp90 cochaperone cyclophilin 40 with Hsc70.</title>
        <authorList>
            <person name="Carrello A."/>
            <person name="Allan R.K."/>
            <person name="Morgan S.L."/>
            <person name="Owen B.A."/>
            <person name="Mok D."/>
            <person name="Ward B.K."/>
            <person name="Minchin R.F."/>
            <person name="Toft D.O."/>
            <person name="Ratajczak T."/>
        </authorList>
    </citation>
    <scope>INTERACTION WITH HSPA8</scope>
</reference>
<reference key="8">
    <citation type="journal article" date="2006" name="FEBS Lett.">
        <title>The chaperone function of cyclophilin 40 maps to a cleft between the prolyl isomerase and tetratricopeptide repeat domains.</title>
        <authorList>
            <person name="Mok D."/>
            <person name="Allan R.K."/>
            <person name="Carrello A."/>
            <person name="Wangoo K."/>
            <person name="Walkinshaw M.D."/>
            <person name="Ratajczak T."/>
        </authorList>
    </citation>
    <scope>FUNCTION</scope>
    <scope>INTERACTION WITH HSP90AB1</scope>
</reference>
<reference key="9">
    <citation type="journal article" date="2010" name="FEBS Lett.">
        <title>S100 proteins regulate the interaction of Hsp90 with cyclophilin 40 and FKBP52 through their tetratricopeptide repeats.</title>
        <authorList>
            <person name="Shimamoto S."/>
            <person name="Kubota Y."/>
            <person name="Tokumitsu H."/>
            <person name="Kobayashi R."/>
        </authorList>
    </citation>
    <scope>INTERACTION WITH S100A1; S100A2 AND S100A6</scope>
</reference>
<reference key="10">
    <citation type="journal article" date="2001" name="Structure">
        <title>Two structures of cyclophilin 40: folding and fidelity in the TPR domains.</title>
        <authorList>
            <person name="Taylor P."/>
            <person name="Dornan J."/>
            <person name="Carrello A."/>
            <person name="Minchin R.F."/>
            <person name="Ratajczak T."/>
            <person name="Walkinshaw M.D."/>
        </authorList>
    </citation>
    <scope>X-RAY CRYSTALLOGRAPHY (1.8 ANGSTROMS)</scope>
</reference>
<name>PPID_BOVIN</name>
<sequence>MSHPSPQAKPSNPSNPRVFFDVDIGGERVGRIVLELFADIVPKTAENFRALCTGEKGIGPTTGKPLHFKGCPFHRIIKKFMIQGGDFSNQNGTGGESIYGEKFEDENFHYKHDKEGLLSMANAGSNTNGSQFFITTVPTPHLDGKHVVFGQVIKGMGVAKILENVEVKGEKPAKLCVIAECGELKEGDDWGIFPKDGSGDSHPDFPEDADVDLKDVDKILLISEDLKNIGNTFFKSQNWEMAIKKYTKVLRYVEGSRAAAEDADGAKLQPVALSCVLNIGACKLKMSDWQGAVDSCLEALEIDPSNTKALYRRAQGWQGLKEYDQALADLKKAQEIAPEDKAIQAELLKVKQKIKAQKDKEKAAYAKMFA</sequence>
<keyword id="KW-0002">3D-structure</keyword>
<keyword id="KW-0007">Acetylation</keyword>
<keyword id="KW-0053">Apoptosis</keyword>
<keyword id="KW-0143">Chaperone</keyword>
<keyword id="KW-0963">Cytoplasm</keyword>
<keyword id="KW-0903">Direct protein sequencing</keyword>
<keyword id="KW-0413">Isomerase</keyword>
<keyword id="KW-0539">Nucleus</keyword>
<keyword id="KW-0597">Phosphoprotein</keyword>
<keyword id="KW-0653">Protein transport</keyword>
<keyword id="KW-1185">Reference proteome</keyword>
<keyword id="KW-0677">Repeat</keyword>
<keyword id="KW-0697">Rotamase</keyword>
<keyword id="KW-0802">TPR repeat</keyword>
<keyword id="KW-0813">Transport</keyword>
<comment type="function">
    <text evidence="2 4 6">PPIase that catalyzes the cis-trans isomerization of proline imidic peptide bonds in oligopeptides and may therefore assist protein folding. Proposed to act as a co-chaperone in HSP90 complexes such as in unligated steroid receptors heterocomplexes. Different co-chaperones seem to compete for association with HSP90 thus establishing distinct HSP90-co-chaperone-receptor complexes with the potential to exert tissue-specific receptor activity control. May have a preference for estrogen receptor complexes and is not found in glucocorticoid receptor complexes. May be involved in cytoplasmic dynein-dependent movement of the receptor from the cytoplasm to the nucleus. May regulate MYB by inhibiting its DNA-binding activity. Involved in regulation of AHR signaling by promoting the formation of the AHR:ARNT dimer; the function is independent of HSP90 but requires the chaperone activity. Involved in regulation of UV radiation-induced apoptosis.</text>
</comment>
<comment type="catalytic activity">
    <reaction evidence="2">
        <text>[protein]-peptidylproline (omega=180) = [protein]-peptidylproline (omega=0)</text>
        <dbReference type="Rhea" id="RHEA:16237"/>
        <dbReference type="Rhea" id="RHEA-COMP:10747"/>
        <dbReference type="Rhea" id="RHEA-COMP:10748"/>
        <dbReference type="ChEBI" id="CHEBI:83833"/>
        <dbReference type="ChEBI" id="CHEBI:83834"/>
        <dbReference type="EC" id="5.2.1.8"/>
    </reaction>
</comment>
<comment type="activity regulation">
    <text evidence="2">Less sensitive to inhibition by cyclosporin A than is CYP-18.</text>
</comment>
<comment type="subunit">
    <text evidence="5 6 7 8 9 10">Identified in ESR1 or NR3C1/GCR steroid receptor-chaperone complexes. Found in HSP90 chaperone complexes with kinase clients LCK or EIF2AK1. Two monomers associate with one HSP90 homodimer. Interacts with HSP90AA1. Interacts with HSP90AB1; PPID and FKBP4 compete for binding to HSP90AB1 and the interaction is mutually exclusive with the PPID:HSPA8 interaction. Interacts with HSPA8; PPID and STIP1 but not FKBP4 compete for binding to HSPA8 and the interaction is mutually exclusive with the PPID:HSP90AB1 interaction. Interacts with S100A1 and S100A2; the interactions dissociate the PPID:HSP90AA1 interaction. Interacts with S100A6. Interacts with MYB, ILF2, XRCC6, RACK1 and RPS3. Interacts with cytoplasmic dynein 1 intermediate chain (DYNC1I1 or DYNC1I2).</text>
</comment>
<comment type="interaction">
    <interactant intactId="EBI-6477155">
        <id>P26882</id>
    </interactant>
    <interactant intactId="EBI-6477285">
        <id>P02639</id>
        <label>S100A1</label>
    </interactant>
    <organismsDiffer>false</organismsDiffer>
    <experiments>2</experiments>
</comment>
<comment type="interaction">
    <interactant intactId="EBI-6477155">
        <id>P26882</id>
    </interactant>
    <interactant intactId="EBI-296047">
        <id>P07900</id>
        <label>HSP90AA1</label>
    </interactant>
    <organismsDiffer>true</organismsDiffer>
    <experiments>4</experiments>
</comment>
<comment type="interaction">
    <interactant intactId="EBI-6477155">
        <id>P26882</id>
    </interactant>
    <interactant intactId="EBI-6477109">
        <id>P35467</id>
        <label>S100a1</label>
    </interactant>
    <organismsDiffer>true</organismsDiffer>
    <experiments>7</experiments>
</comment>
<comment type="interaction">
    <interactant intactId="EBI-6477155">
        <id>P26882</id>
    </interactant>
    <interactant intactId="EBI-752230">
        <id>P29034</id>
        <label>S100A2</label>
    </interactant>
    <organismsDiffer>true</organismsDiffer>
    <experiments>3</experiments>
</comment>
<comment type="interaction">
    <interactant intactId="EBI-6477155">
        <id>P26882</id>
    </interactant>
    <interactant intactId="EBI-352877">
        <id>P06703</id>
        <label>S100A6</label>
    </interactant>
    <organismsDiffer>true</organismsDiffer>
    <experiments>3</experiments>
</comment>
<comment type="subcellular location">
    <subcellularLocation>
        <location evidence="1">Cytoplasm</location>
    </subcellularLocation>
    <subcellularLocation>
        <location evidence="1">Nucleus</location>
        <location evidence="1">Nucleolus</location>
    </subcellularLocation>
    <subcellularLocation>
        <location evidence="1">Nucleus</location>
        <location evidence="1">Nucleoplasm</location>
    </subcellularLocation>
</comment>
<comment type="tissue specificity">
    <text evidence="8">Detected in heart, thymis and brain.</text>
</comment>
<comment type="PTM">
    <text>The N-terminus is blocked.</text>
</comment>
<comment type="similarity">
    <text evidence="14">Belongs to the cyclophilin-type PPIase family. PPIase D subfamily.</text>
</comment>
<comment type="caution">
    <text evidence="14">This protein should not be confused with mitochondrial peptidyl-prolyl cis-trans isomerase F (PPIF) which is often referred to as cyclophilin D or CypD.</text>
</comment>
<organism>
    <name type="scientific">Bos taurus</name>
    <name type="common">Bovine</name>
    <dbReference type="NCBI Taxonomy" id="9913"/>
    <lineage>
        <taxon>Eukaryota</taxon>
        <taxon>Metazoa</taxon>
        <taxon>Chordata</taxon>
        <taxon>Craniata</taxon>
        <taxon>Vertebrata</taxon>
        <taxon>Euteleostomi</taxon>
        <taxon>Mammalia</taxon>
        <taxon>Eutheria</taxon>
        <taxon>Laurasiatheria</taxon>
        <taxon>Artiodactyla</taxon>
        <taxon>Ruminantia</taxon>
        <taxon>Pecora</taxon>
        <taxon>Bovidae</taxon>
        <taxon>Bovinae</taxon>
        <taxon>Bos</taxon>
    </lineage>
</organism>
<feature type="chain" id="PRO_0000064152" description="Peptidyl-prolyl cis-trans isomerase D">
    <location>
        <begin position="1"/>
        <end position="370"/>
    </location>
</feature>
<feature type="domain" description="PPIase cyclophilin-type" evidence="3">
    <location>
        <begin position="19"/>
        <end position="183"/>
    </location>
</feature>
<feature type="repeat" description="TPR 1">
    <location>
        <begin position="223"/>
        <end position="256"/>
    </location>
</feature>
<feature type="repeat" description="TPR 2">
    <location>
        <begin position="273"/>
        <end position="306"/>
    </location>
</feature>
<feature type="repeat" description="TPR 3">
    <location>
        <begin position="307"/>
        <end position="340"/>
    </location>
</feature>
<feature type="region of interest" description="Chaperone activity">
    <location>
        <begin position="185"/>
        <end position="215"/>
    </location>
</feature>
<feature type="region of interest" description="Interaction with HSP90AB1">
    <location>
        <begin position="214"/>
        <end position="370"/>
    </location>
</feature>
<feature type="modified residue" description="Phosphoserine" evidence="1">
    <location>
        <position position="5"/>
    </location>
</feature>
<feature type="modified residue" description="N6-acetyllysine" evidence="2">
    <location>
        <position position="171"/>
    </location>
</feature>
<feature type="modified residue" description="Phosphoserine" evidence="1">
    <location>
        <position position="198"/>
    </location>
</feature>
<feature type="strand" evidence="15">
    <location>
        <begin position="8"/>
        <end position="11"/>
    </location>
</feature>
<feature type="strand" evidence="15">
    <location>
        <begin position="17"/>
        <end position="24"/>
    </location>
</feature>
<feature type="strand" evidence="15">
    <location>
        <begin position="27"/>
        <end position="36"/>
    </location>
</feature>
<feature type="turn" evidence="15">
    <location>
        <begin position="38"/>
        <end position="40"/>
    </location>
</feature>
<feature type="helix" evidence="15">
    <location>
        <begin position="42"/>
        <end position="53"/>
    </location>
</feature>
<feature type="turn" evidence="15">
    <location>
        <begin position="60"/>
        <end position="62"/>
    </location>
</feature>
<feature type="strand" evidence="15">
    <location>
        <begin position="63"/>
        <end position="66"/>
    </location>
</feature>
<feature type="strand" evidence="15">
    <location>
        <begin position="72"/>
        <end position="77"/>
    </location>
</feature>
<feature type="turn" evidence="15">
    <location>
        <begin position="78"/>
        <end position="80"/>
    </location>
</feature>
<feature type="strand" evidence="15">
    <location>
        <begin position="81"/>
        <end position="84"/>
    </location>
</feature>
<feature type="turn" evidence="15">
    <location>
        <begin position="87"/>
        <end position="89"/>
    </location>
</feature>
<feature type="strand" evidence="15">
    <location>
        <begin position="90"/>
        <end position="93"/>
    </location>
</feature>
<feature type="strand" evidence="16">
    <location>
        <begin position="98"/>
        <end position="101"/>
    </location>
</feature>
<feature type="strand" evidence="15">
    <location>
        <begin position="117"/>
        <end position="120"/>
    </location>
</feature>
<feature type="strand" evidence="15">
    <location>
        <begin position="132"/>
        <end position="137"/>
    </location>
</feature>
<feature type="helix" evidence="15">
    <location>
        <begin position="140"/>
        <end position="142"/>
    </location>
</feature>
<feature type="turn" evidence="15">
    <location>
        <begin position="143"/>
        <end position="145"/>
    </location>
</feature>
<feature type="strand" evidence="15">
    <location>
        <begin position="148"/>
        <end position="154"/>
    </location>
</feature>
<feature type="helix" evidence="15">
    <location>
        <begin position="156"/>
        <end position="163"/>
    </location>
</feature>
<feature type="strand" evidence="15">
    <location>
        <begin position="171"/>
        <end position="174"/>
    </location>
</feature>
<feature type="strand" evidence="15">
    <location>
        <begin position="176"/>
        <end position="184"/>
    </location>
</feature>
<feature type="strand" evidence="15">
    <location>
        <begin position="196"/>
        <end position="198"/>
    </location>
</feature>
<feature type="helix" evidence="15">
    <location>
        <begin position="206"/>
        <end position="208"/>
    </location>
</feature>
<feature type="strand" evidence="15">
    <location>
        <begin position="209"/>
        <end position="211"/>
    </location>
</feature>
<feature type="helix" evidence="15">
    <location>
        <begin position="216"/>
        <end position="235"/>
    </location>
</feature>
<feature type="helix" evidence="15">
    <location>
        <begin position="239"/>
        <end position="259"/>
    </location>
</feature>
<feature type="helix" evidence="15">
    <location>
        <begin position="262"/>
        <end position="265"/>
    </location>
</feature>
<feature type="helix" evidence="15">
    <location>
        <begin position="266"/>
        <end position="268"/>
    </location>
</feature>
<feature type="helix" evidence="15">
    <location>
        <begin position="269"/>
        <end position="285"/>
    </location>
</feature>
<feature type="helix" evidence="15">
    <location>
        <begin position="289"/>
        <end position="300"/>
    </location>
</feature>
<feature type="helix" evidence="15">
    <location>
        <begin position="307"/>
        <end position="319"/>
    </location>
</feature>
<feature type="helix" evidence="15">
    <location>
        <begin position="323"/>
        <end position="336"/>
    </location>
</feature>
<feature type="helix" evidence="15">
    <location>
        <begin position="341"/>
        <end position="362"/>
    </location>
</feature>
<proteinExistence type="evidence at protein level"/>
<protein>
    <recommendedName>
        <fullName evidence="14">Peptidyl-prolyl cis-trans isomerase D</fullName>
        <shortName evidence="14">PPIase D</shortName>
        <ecNumber evidence="2">5.2.1.8</ecNumber>
    </recommendedName>
    <alternativeName>
        <fullName evidence="11">40 kDa peptidyl-prolyl cis-trans isomerase</fullName>
    </alternativeName>
    <alternativeName>
        <fullName evidence="12">Cyclophilin-40</fullName>
        <shortName evidence="12">CYP-40</shortName>
    </alternativeName>
    <alternativeName>
        <fullName evidence="13">Cyclophilin-related protein</fullName>
    </alternativeName>
    <alternativeName>
        <fullName evidence="13">Estrogen receptor-binding cyclophilin</fullName>
    </alternativeName>
    <alternativeName>
        <fullName>Rotamase D</fullName>
    </alternativeName>
</protein>